<dbReference type="EC" id="2.3.1.174"/>
<dbReference type="EMBL" id="AF009224">
    <property type="protein sequence ID" value="AAC46434.1"/>
    <property type="molecule type" value="Genomic_DNA"/>
</dbReference>
<dbReference type="EMBL" id="CR543861">
    <property type="protein sequence ID" value="CAG68313.1"/>
    <property type="molecule type" value="Genomic_DNA"/>
</dbReference>
<dbReference type="SMR" id="Q43935"/>
<dbReference type="STRING" id="202950.GCA_001485005_02111"/>
<dbReference type="GeneID" id="45233862"/>
<dbReference type="KEGG" id="aci:ACIAD1450"/>
<dbReference type="eggNOG" id="COG0183">
    <property type="taxonomic scope" value="Bacteria"/>
</dbReference>
<dbReference type="HOGENOM" id="CLU_031026_2_2_6"/>
<dbReference type="OrthoDB" id="9764638at2"/>
<dbReference type="BioCyc" id="ASP62977:ACIAD_RS06700-MONOMER"/>
<dbReference type="UniPathway" id="UPA00157">
    <property type="reaction ID" value="UER00263"/>
</dbReference>
<dbReference type="Proteomes" id="UP000000430">
    <property type="component" value="Chromosome"/>
</dbReference>
<dbReference type="GO" id="GO:0033812">
    <property type="term" value="F:3-oxoadipyl-CoA thiolase activity"/>
    <property type="evidence" value="ECO:0007669"/>
    <property type="project" value="UniProtKB-EC"/>
</dbReference>
<dbReference type="GO" id="GO:0019619">
    <property type="term" value="P:3,4-dihydroxybenzoate catabolic process"/>
    <property type="evidence" value="ECO:0007669"/>
    <property type="project" value="InterPro"/>
</dbReference>
<dbReference type="GO" id="GO:0042952">
    <property type="term" value="P:beta-ketoadipate pathway"/>
    <property type="evidence" value="ECO:0007669"/>
    <property type="project" value="UniProtKB-UniPathway"/>
</dbReference>
<dbReference type="CDD" id="cd00751">
    <property type="entry name" value="thiolase"/>
    <property type="match status" value="1"/>
</dbReference>
<dbReference type="FunFam" id="3.40.47.10:FF:000010">
    <property type="entry name" value="Acetyl-CoA acetyltransferase (Thiolase)"/>
    <property type="match status" value="1"/>
</dbReference>
<dbReference type="Gene3D" id="3.40.47.10">
    <property type="match status" value="1"/>
</dbReference>
<dbReference type="InterPro" id="IPR012793">
    <property type="entry name" value="PcaF"/>
</dbReference>
<dbReference type="InterPro" id="IPR002155">
    <property type="entry name" value="Thiolase"/>
</dbReference>
<dbReference type="InterPro" id="IPR016039">
    <property type="entry name" value="Thiolase-like"/>
</dbReference>
<dbReference type="InterPro" id="IPR020615">
    <property type="entry name" value="Thiolase_acyl_enz_int_AS"/>
</dbReference>
<dbReference type="InterPro" id="IPR020610">
    <property type="entry name" value="Thiolase_AS"/>
</dbReference>
<dbReference type="InterPro" id="IPR020617">
    <property type="entry name" value="Thiolase_C"/>
</dbReference>
<dbReference type="InterPro" id="IPR020613">
    <property type="entry name" value="Thiolase_CS"/>
</dbReference>
<dbReference type="InterPro" id="IPR020616">
    <property type="entry name" value="Thiolase_N"/>
</dbReference>
<dbReference type="NCBIfam" id="TIGR01930">
    <property type="entry name" value="AcCoA-C-Actrans"/>
    <property type="match status" value="1"/>
</dbReference>
<dbReference type="NCBIfam" id="TIGR02430">
    <property type="entry name" value="pcaF"/>
    <property type="match status" value="1"/>
</dbReference>
<dbReference type="NCBIfam" id="NF006551">
    <property type="entry name" value="PRK09050.1"/>
    <property type="match status" value="1"/>
</dbReference>
<dbReference type="PANTHER" id="PTHR18919:SF107">
    <property type="entry name" value="ACETYL-COA ACETYLTRANSFERASE, CYTOSOLIC"/>
    <property type="match status" value="1"/>
</dbReference>
<dbReference type="PANTHER" id="PTHR18919">
    <property type="entry name" value="ACETYL-COA C-ACYLTRANSFERASE"/>
    <property type="match status" value="1"/>
</dbReference>
<dbReference type="Pfam" id="PF02803">
    <property type="entry name" value="Thiolase_C"/>
    <property type="match status" value="1"/>
</dbReference>
<dbReference type="Pfam" id="PF00108">
    <property type="entry name" value="Thiolase_N"/>
    <property type="match status" value="1"/>
</dbReference>
<dbReference type="PIRSF" id="PIRSF000429">
    <property type="entry name" value="Ac-CoA_Ac_transf"/>
    <property type="match status" value="1"/>
</dbReference>
<dbReference type="SUPFAM" id="SSF53901">
    <property type="entry name" value="Thiolase-like"/>
    <property type="match status" value="2"/>
</dbReference>
<dbReference type="PROSITE" id="PS00098">
    <property type="entry name" value="THIOLASE_1"/>
    <property type="match status" value="1"/>
</dbReference>
<dbReference type="PROSITE" id="PS00737">
    <property type="entry name" value="THIOLASE_2"/>
    <property type="match status" value="1"/>
</dbReference>
<dbReference type="PROSITE" id="PS00099">
    <property type="entry name" value="THIOLASE_3"/>
    <property type="match status" value="1"/>
</dbReference>
<protein>
    <recommendedName>
        <fullName>Beta-ketoadipyl-CoA thiolase</fullName>
        <ecNumber>2.3.1.174</ecNumber>
    </recommendedName>
    <alternativeName>
        <fullName>3-oxoadipyl-CoA thiolase</fullName>
    </alternativeName>
</protein>
<gene>
    <name type="primary">catF</name>
    <name type="ordered locus">ACIAD1450</name>
</gene>
<proteinExistence type="inferred from homology"/>
<feature type="chain" id="PRO_0000206424" description="Beta-ketoadipyl-CoA thiolase">
    <location>
        <begin position="1"/>
        <end position="401"/>
    </location>
</feature>
<feature type="active site" description="Acyl-thioester intermediate" evidence="1">
    <location>
        <position position="90"/>
    </location>
</feature>
<feature type="active site" description="Proton acceptor" evidence="2">
    <location>
        <position position="357"/>
    </location>
</feature>
<feature type="active site" description="Proton acceptor" evidence="2">
    <location>
        <position position="387"/>
    </location>
</feature>
<name>CATF_ACIAD</name>
<reference key="1">
    <citation type="journal article" date="1994" name="Gene">
        <title>Unusual G + C content and codon usage in catIJF, a segment of the ben-cat supra-operonic cluster in the Acinetobacter calcoaceticus chromosome.</title>
        <authorList>
            <person name="Shanley M.S."/>
            <person name="Harrison A."/>
            <person name="Parales R.E."/>
            <person name="Kowalchuk G."/>
            <person name="Mitchell D.J."/>
            <person name="Ornston L.N."/>
        </authorList>
    </citation>
    <scope>NUCLEOTIDE SEQUENCE [GENOMIC DNA]</scope>
</reference>
<reference key="2">
    <citation type="journal article" date="2004" name="Nucleic Acids Res.">
        <title>Unique features revealed by the genome sequence of Acinetobacter sp. ADP1, a versatile and naturally transformation competent bacterium.</title>
        <authorList>
            <person name="Barbe V."/>
            <person name="Vallenet D."/>
            <person name="Fonknechten N."/>
            <person name="Kreimeyer A."/>
            <person name="Oztas S."/>
            <person name="Labarre L."/>
            <person name="Cruveiller S."/>
            <person name="Robert C."/>
            <person name="Duprat S."/>
            <person name="Wincker P."/>
            <person name="Ornston L.N."/>
            <person name="Weissenbach J."/>
            <person name="Marliere P."/>
            <person name="Cohen G.N."/>
            <person name="Medigue C."/>
        </authorList>
    </citation>
    <scope>NUCLEOTIDE SEQUENCE [LARGE SCALE GENOMIC DNA]</scope>
    <source>
        <strain>ATCC 33305 / BD413 / ADP1</strain>
    </source>
</reference>
<organism>
    <name type="scientific">Acinetobacter baylyi (strain ATCC 33305 / BD413 / ADP1)</name>
    <dbReference type="NCBI Taxonomy" id="62977"/>
    <lineage>
        <taxon>Bacteria</taxon>
        <taxon>Pseudomonadati</taxon>
        <taxon>Pseudomonadota</taxon>
        <taxon>Gammaproteobacteria</taxon>
        <taxon>Moraxellales</taxon>
        <taxon>Moraxellaceae</taxon>
        <taxon>Acinetobacter</taxon>
    </lineage>
</organism>
<comment type="function">
    <text>Catalyzes thiolytic cleavage of beta-ketoadipyl-CoA to succinyl-CoA and acetyl-CoA.</text>
</comment>
<comment type="catalytic activity">
    <reaction>
        <text>succinyl-CoA + acetyl-CoA = 3-oxoadipyl-CoA + CoA</text>
        <dbReference type="Rhea" id="RHEA:19481"/>
        <dbReference type="ChEBI" id="CHEBI:57287"/>
        <dbReference type="ChEBI" id="CHEBI:57288"/>
        <dbReference type="ChEBI" id="CHEBI:57292"/>
        <dbReference type="ChEBI" id="CHEBI:57348"/>
        <dbReference type="EC" id="2.3.1.174"/>
    </reaction>
</comment>
<comment type="pathway">
    <text>Aromatic compound metabolism; beta-ketoadipate pathway; acetyl-CoA and succinyl-CoA from 3-oxoadipate: step 2/2.</text>
</comment>
<comment type="similarity">
    <text evidence="3">Belongs to the thiolase-like superfamily. Thiolase family.</text>
</comment>
<keyword id="KW-0012">Acyltransferase</keyword>
<keyword id="KW-0058">Aromatic hydrocarbons catabolism</keyword>
<keyword id="KW-0808">Transferase</keyword>
<sequence>MKHAYIVDAIRTPFGRYAGGLAAVRADDLGAIPIAALIERNPSVNWAQVDDVIYGCANQAGEDNRNVGRMSALLAGLPVEVPATTVNRLCGSSLDAIAMAARAIKAGEAHLIIAGGVESMSRAPYVMGKSEGAFGRTQKIEDTTMGWRFINPKLKAMYGVDTMPQTAENVAEQFGIQREDQDQFAYTSQQRTAAAQAKGYFAKEIVPVTIPQRKGEPVVIATDEHPRASTTLEGLAKLKGVVKPEGSVTAGNASGINDGAAAVLIASDEAVAQYQLKARAKIIASTTVGIEPRIMGFAPAPAIKKLLKQANLTLDQMDVIELNEAFAAQALACTRDLGLADDDARVNPNGGAIALGHPLGASGARLVTTALNQLEQSGGKYALCSMCIGVGQGIALIIERV</sequence>
<evidence type="ECO:0000250" key="1"/>
<evidence type="ECO:0000255" key="2">
    <source>
        <dbReference type="PROSITE-ProRule" id="PRU10020"/>
    </source>
</evidence>
<evidence type="ECO:0000305" key="3"/>
<accession>Q43935</accession>